<feature type="initiator methionine" description="Removed; by host">
    <location>
        <position position="1"/>
    </location>
</feature>
<feature type="chain" id="PRO_0000099458" description="Protein OPG069">
    <location>
        <begin position="2"/>
        <end position="166"/>
    </location>
</feature>
<feature type="lipid moiety-binding region" description="N-myristoyl glycine; by host" evidence="2">
    <location>
        <position position="2"/>
    </location>
</feature>
<feature type="mutagenesis site" description="Complete loss of myristoylation." evidence="2">
    <original>G</original>
    <variation>A</variation>
    <location>
        <position position="2"/>
    </location>
</feature>
<accession>P68447</accession>
<accession>P21048</accession>
<gene>
    <name type="primary">OPG069</name>
    <name type="ORF">E7R</name>
</gene>
<organism>
    <name type="scientific">Vaccinia virus (strain Copenhagen)</name>
    <name type="common">VACV</name>
    <dbReference type="NCBI Taxonomy" id="10249"/>
    <lineage>
        <taxon>Viruses</taxon>
        <taxon>Varidnaviria</taxon>
        <taxon>Bamfordvirae</taxon>
        <taxon>Nucleocytoviricota</taxon>
        <taxon>Pokkesviricetes</taxon>
        <taxon>Chitovirales</taxon>
        <taxon>Poxviridae</taxon>
        <taxon>Chordopoxvirinae</taxon>
        <taxon>Orthopoxvirus</taxon>
        <taxon>Vaccinia virus</taxon>
    </lineage>
</organism>
<protein>
    <recommendedName>
        <fullName>Protein OPG069</fullName>
    </recommendedName>
    <alternativeName>
        <fullName>Protein E7</fullName>
    </alternativeName>
</protein>
<proteinExistence type="evidence at protein level"/>
<sequence length="166" mass="19512">MGTAATIQTPTKLMNKENAEMILEKIVDHIVMYISDESSDSENNPEYIDFRNRYEDYRSLIIKSDHEFVKLCKNHAEKSSPETQQMIIKHIYEQYLIPVSEVLLKPIMSMGDIITYNGCKDNEWMLEQLSTLNFNNLRTWNSCSIGNVTRLFYTFFSYLMKDKLNI</sequence>
<organismHost>
    <name type="scientific">Homo sapiens</name>
    <name type="common">Human</name>
    <dbReference type="NCBI Taxonomy" id="9606"/>
</organismHost>
<reference key="1">
    <citation type="journal article" date="1990" name="Virology">
        <title>The complete DNA sequence of vaccinia virus.</title>
        <authorList>
            <person name="Goebel S.J."/>
            <person name="Johnson G.P."/>
            <person name="Perkus M.E."/>
            <person name="Davis S.W."/>
            <person name="Winslow J.P."/>
            <person name="Paoletti E."/>
        </authorList>
    </citation>
    <scope>NUCLEOTIDE SEQUENCE [LARGE SCALE GENOMIC DNA]</scope>
</reference>
<reference key="2">
    <citation type="journal article" date="1990" name="Virology">
        <title>Appendix to 'The complete DNA sequence of vaccinia virus'.</title>
        <authorList>
            <person name="Goebel S.J."/>
            <person name="Johnson G.P."/>
            <person name="Perkus M.E."/>
            <person name="Davis S.W."/>
            <person name="Winslow J.P."/>
            <person name="Paoletti E."/>
        </authorList>
    </citation>
    <scope>NUCLEOTIDE SEQUENCE [LARGE SCALE GENOMIC DNA]</scope>
</reference>
<reference key="3">
    <citation type="journal article" date="1997" name="J. Virol.">
        <title>Identification and analysis of three myristylated vaccinia virus late proteins.</title>
        <authorList>
            <person name="Martin K.H."/>
            <person name="Grosenbach D.W."/>
            <person name="Franke C.A."/>
            <person name="Hruby D.E."/>
        </authorList>
    </citation>
    <scope>MYRISTOYLATION AT GLY-2</scope>
    <scope>SUBCELLULAR LOCATION</scope>
    <scope>MUTAGENESIS OF GLY-2</scope>
</reference>
<evidence type="ECO:0000250" key="1">
    <source>
        <dbReference type="UniProtKB" id="P68446"/>
    </source>
</evidence>
<evidence type="ECO:0000269" key="2">
    <source>
    </source>
</evidence>
<evidence type="ECO:0000305" key="3"/>
<name>PG069_VACCC</name>
<dbReference type="EMBL" id="M35027">
    <property type="protein sequence ID" value="AAA48045.1"/>
    <property type="molecule type" value="Genomic_DNA"/>
</dbReference>
<dbReference type="PIR" id="B42509">
    <property type="entry name" value="B42509"/>
</dbReference>
<dbReference type="iPTMnet" id="P68447"/>
<dbReference type="Proteomes" id="UP000008269">
    <property type="component" value="Segment"/>
</dbReference>
<dbReference type="GO" id="GO:0030430">
    <property type="term" value="C:host cell cytoplasm"/>
    <property type="evidence" value="ECO:0007669"/>
    <property type="project" value="UniProtKB-SubCell"/>
</dbReference>
<dbReference type="InterPro" id="IPR035345">
    <property type="entry name" value="E7R_orthopoxvir"/>
</dbReference>
<dbReference type="Pfam" id="PF17467">
    <property type="entry name" value="E7R"/>
    <property type="match status" value="1"/>
</dbReference>
<comment type="subcellular location">
    <subcellularLocation>
        <location evidence="2">Host cytoplasm</location>
    </subcellularLocation>
</comment>
<comment type="induction">
    <text evidence="1">Expressed in the intermediate phase of the viral replicative cycle.</text>
</comment>
<comment type="PTM">
    <text evidence="2">Myristoylated.</text>
</comment>
<comment type="similarity">
    <text evidence="3">Belongs to the orthopoxvirus OPG069 family.</text>
</comment>
<keyword id="KW-1035">Host cytoplasm</keyword>
<keyword id="KW-0449">Lipoprotein</keyword>
<keyword id="KW-0519">Myristate</keyword>
<keyword id="KW-1185">Reference proteome</keyword>